<protein>
    <recommendedName>
        <fullName>Protein YhfA</fullName>
    </recommendedName>
</protein>
<proteinExistence type="predicted"/>
<gene>
    <name type="primary">yhfA</name>
    <name type="ordered locus">Z4717</name>
    <name type="ordered locus">ECs4207</name>
</gene>
<feature type="chain" id="PRO_0000169517" description="Protein YhfA">
    <location>
        <begin position="1"/>
        <end position="134"/>
    </location>
</feature>
<accession>P0ADX3</accession>
<accession>P24246</accession>
<reference key="1">
    <citation type="journal article" date="2001" name="Nature">
        <title>Genome sequence of enterohaemorrhagic Escherichia coli O157:H7.</title>
        <authorList>
            <person name="Perna N.T."/>
            <person name="Plunkett G. III"/>
            <person name="Burland V."/>
            <person name="Mau B."/>
            <person name="Glasner J.D."/>
            <person name="Rose D.J."/>
            <person name="Mayhew G.F."/>
            <person name="Evans P.S."/>
            <person name="Gregor J."/>
            <person name="Kirkpatrick H.A."/>
            <person name="Posfai G."/>
            <person name="Hackett J."/>
            <person name="Klink S."/>
            <person name="Boutin A."/>
            <person name="Shao Y."/>
            <person name="Miller L."/>
            <person name="Grotbeck E.J."/>
            <person name="Davis N.W."/>
            <person name="Lim A."/>
            <person name="Dimalanta E.T."/>
            <person name="Potamousis K."/>
            <person name="Apodaca J."/>
            <person name="Anantharaman T.S."/>
            <person name="Lin J."/>
            <person name="Yen G."/>
            <person name="Schwartz D.C."/>
            <person name="Welch R.A."/>
            <person name="Blattner F.R."/>
        </authorList>
    </citation>
    <scope>NUCLEOTIDE SEQUENCE [LARGE SCALE GENOMIC DNA]</scope>
    <source>
        <strain>O157:H7 / EDL933 / ATCC 700927 / EHEC</strain>
    </source>
</reference>
<reference key="2">
    <citation type="journal article" date="2001" name="DNA Res.">
        <title>Complete genome sequence of enterohemorrhagic Escherichia coli O157:H7 and genomic comparison with a laboratory strain K-12.</title>
        <authorList>
            <person name="Hayashi T."/>
            <person name="Makino K."/>
            <person name="Ohnishi M."/>
            <person name="Kurokawa K."/>
            <person name="Ishii K."/>
            <person name="Yokoyama K."/>
            <person name="Han C.-G."/>
            <person name="Ohtsubo E."/>
            <person name="Nakayama K."/>
            <person name="Murata T."/>
            <person name="Tanaka M."/>
            <person name="Tobe T."/>
            <person name="Iida T."/>
            <person name="Takami H."/>
            <person name="Honda T."/>
            <person name="Sasakawa C."/>
            <person name="Ogasawara N."/>
            <person name="Yasunaga T."/>
            <person name="Kuhara S."/>
            <person name="Shiba T."/>
            <person name="Hattori M."/>
            <person name="Shinagawa H."/>
        </authorList>
    </citation>
    <scope>NUCLEOTIDE SEQUENCE [LARGE SCALE GENOMIC DNA]</scope>
    <source>
        <strain>O157:H7 / Sakai / RIMD 0509952 / EHEC</strain>
    </source>
</reference>
<sequence>MQARVKWVEGLTFLGESASGHQILMDGNSGDKAPSPMEMVLMAAGGCSAIDVVSILQKGRQDVVDCEVKLTSERREEAPRLFTHINLHFIVTGRDLKDAAVARAVDLSAEKYCSVALMLEKAVNITHSYEVVAA</sequence>
<name>YHFA_ECO57</name>
<keyword id="KW-1185">Reference proteome</keyword>
<organism>
    <name type="scientific">Escherichia coli O157:H7</name>
    <dbReference type="NCBI Taxonomy" id="83334"/>
    <lineage>
        <taxon>Bacteria</taxon>
        <taxon>Pseudomonadati</taxon>
        <taxon>Pseudomonadota</taxon>
        <taxon>Gammaproteobacteria</taxon>
        <taxon>Enterobacterales</taxon>
        <taxon>Enterobacteriaceae</taxon>
        <taxon>Escherichia</taxon>
    </lineage>
</organism>
<dbReference type="EMBL" id="AE005174">
    <property type="protein sequence ID" value="AAG58464.1"/>
    <property type="molecule type" value="Genomic_DNA"/>
</dbReference>
<dbReference type="EMBL" id="BA000007">
    <property type="protein sequence ID" value="BAB37630.1"/>
    <property type="molecule type" value="Genomic_DNA"/>
</dbReference>
<dbReference type="PIR" id="D86000">
    <property type="entry name" value="D86000"/>
</dbReference>
<dbReference type="PIR" id="G91154">
    <property type="entry name" value="G91154"/>
</dbReference>
<dbReference type="RefSeq" id="NP_312234.1">
    <property type="nucleotide sequence ID" value="NC_002695.1"/>
</dbReference>
<dbReference type="RefSeq" id="WP_001148908.1">
    <property type="nucleotide sequence ID" value="NZ_VOAI01000004.1"/>
</dbReference>
<dbReference type="SMR" id="P0ADX3"/>
<dbReference type="STRING" id="155864.Z4717"/>
<dbReference type="GeneID" id="915937"/>
<dbReference type="KEGG" id="ece:Z4717"/>
<dbReference type="KEGG" id="ecs:ECs_4207"/>
<dbReference type="PATRIC" id="fig|386585.9.peg.4391"/>
<dbReference type="eggNOG" id="COG1765">
    <property type="taxonomic scope" value="Bacteria"/>
</dbReference>
<dbReference type="HOGENOM" id="CLU_114057_1_2_6"/>
<dbReference type="OMA" id="IHMHFVV"/>
<dbReference type="Proteomes" id="UP000000558">
    <property type="component" value="Chromosome"/>
</dbReference>
<dbReference type="Proteomes" id="UP000002519">
    <property type="component" value="Chromosome"/>
</dbReference>
<dbReference type="Gene3D" id="2.20.25.10">
    <property type="match status" value="1"/>
</dbReference>
<dbReference type="Gene3D" id="3.30.300.20">
    <property type="match status" value="1"/>
</dbReference>
<dbReference type="InterPro" id="IPR015946">
    <property type="entry name" value="KH_dom-like_a/b"/>
</dbReference>
<dbReference type="InterPro" id="IPR003718">
    <property type="entry name" value="OsmC/Ohr_fam"/>
</dbReference>
<dbReference type="InterPro" id="IPR036102">
    <property type="entry name" value="OsmC/Ohrsf"/>
</dbReference>
<dbReference type="NCBIfam" id="NF008009">
    <property type="entry name" value="PRK10738.1"/>
    <property type="match status" value="1"/>
</dbReference>
<dbReference type="PANTHER" id="PTHR34352">
    <property type="entry name" value="PROTEIN YHFA"/>
    <property type="match status" value="1"/>
</dbReference>
<dbReference type="PANTHER" id="PTHR34352:SF1">
    <property type="entry name" value="PROTEIN YHFA"/>
    <property type="match status" value="1"/>
</dbReference>
<dbReference type="Pfam" id="PF02566">
    <property type="entry name" value="OsmC"/>
    <property type="match status" value="1"/>
</dbReference>
<dbReference type="SUPFAM" id="SSF82784">
    <property type="entry name" value="OsmC-like"/>
    <property type="match status" value="1"/>
</dbReference>